<evidence type="ECO:0000269" key="1">
    <source>
    </source>
</evidence>
<evidence type="ECO:0000269" key="2">
    <source>
    </source>
</evidence>
<evidence type="ECO:0000305" key="3"/>
<feature type="chain" id="PRO_0000414198" description="Accessory Sec system protein Asp2">
    <location>
        <begin position="1"/>
        <end position="510"/>
    </location>
</feature>
<reference key="1">
    <citation type="journal article" date="2002" name="Mol. Microbiol.">
        <title>An accessory sec locus of Streptococcus gordonii is required for export of the surface protein GspB and for normal levels of binding to human platelets.</title>
        <authorList>
            <person name="Bensing B.A."/>
            <person name="Sullam P.M."/>
        </authorList>
    </citation>
    <scope>NUCLEOTIDE SEQUENCE [GENOMIC DNA]</scope>
    <scope>DISRUPTION PHENOTYPE</scope>
    <source>
        <strain>M99</strain>
    </source>
</reference>
<reference key="2">
    <citation type="journal article" date="2004" name="Mol. Microbiol.">
        <title>Genes in the accessory sec locus of Streptococcus gordonii have three functionally distinct effects on the expression of the platelet-binding protein GspB.</title>
        <authorList>
            <person name="Takamatsu D."/>
            <person name="Bensing B.A."/>
            <person name="Sullam P.M."/>
        </authorList>
    </citation>
    <scope>FUNCTION</scope>
    <scope>DISRUPTION PHENOTYPE</scope>
    <source>
        <strain>M99</strain>
    </source>
</reference>
<reference key="3">
    <citation type="journal article" date="2011" name="J. Bacteriol.">
        <title>Asp2 and Asp3 interact directly with GspB, the export substrate of the Streptococcus gordonii accessory Sec System.</title>
        <authorList>
            <person name="Yen Y.T."/>
            <person name="Seepersaud R."/>
            <person name="Bensing B.A."/>
            <person name="Sullam P.M."/>
        </authorList>
    </citation>
    <scope>INTERACTION WITH GSPB</scope>
</reference>
<keyword id="KW-0653">Protein transport</keyword>
<keyword id="KW-0811">Translocation</keyword>
<keyword id="KW-0813">Transport</keyword>
<accession>Q9AET8</accession>
<proteinExistence type="evidence at protein level"/>
<organism>
    <name type="scientific">Streptococcus gordonii</name>
    <dbReference type="NCBI Taxonomy" id="1302"/>
    <lineage>
        <taxon>Bacteria</taxon>
        <taxon>Bacillati</taxon>
        <taxon>Bacillota</taxon>
        <taxon>Bacilli</taxon>
        <taxon>Lactobacillales</taxon>
        <taxon>Streptococcaceae</taxon>
        <taxon>Streptococcus</taxon>
    </lineage>
</organism>
<dbReference type="EMBL" id="AY028381">
    <property type="protein sequence ID" value="AAK16999.1"/>
    <property type="molecule type" value="Genomic_DNA"/>
</dbReference>
<dbReference type="SMR" id="Q9AET8"/>
<dbReference type="IntAct" id="Q9AET8">
    <property type="interactions" value="1"/>
</dbReference>
<dbReference type="ESTHER" id="strgn-asp2">
    <property type="family name" value="Asp2"/>
</dbReference>
<dbReference type="TCDB" id="3.A.5.10.1">
    <property type="family name" value="the general secretory pathway (sec) family"/>
</dbReference>
<dbReference type="GO" id="GO:0015031">
    <property type="term" value="P:protein transport"/>
    <property type="evidence" value="ECO:0007669"/>
    <property type="project" value="UniProtKB-KW"/>
</dbReference>
<dbReference type="InterPro" id="IPR029058">
    <property type="entry name" value="AB_hydrolase_fold"/>
</dbReference>
<dbReference type="InterPro" id="IPR022267">
    <property type="entry name" value="Asp2"/>
</dbReference>
<dbReference type="NCBIfam" id="TIGR03712">
    <property type="entry name" value="acc_sec_asp2"/>
    <property type="match status" value="1"/>
</dbReference>
<dbReference type="Pfam" id="PF16929">
    <property type="entry name" value="Asp2"/>
    <property type="match status" value="1"/>
</dbReference>
<dbReference type="SUPFAM" id="SSF53474">
    <property type="entry name" value="alpha/beta-Hydrolases"/>
    <property type="match status" value="1"/>
</dbReference>
<name>ASP2_STRGN</name>
<comment type="function">
    <text evidence="2">Part of the accessory SecA2/SecY2 system specifically required to export GspB, a serine-rich repeat cell wall protein encoded upstream in the same operon.</text>
</comment>
<comment type="subunit">
    <text>Part of the accessory SecA2/SecY2 protein translocation apparatus required to export cell wall protein GspB. Binds the Ser-rich domains (SSR1 and SSR2) of non-glycosylated GspB, binds much less to glycosylated protein.</text>
</comment>
<comment type="interaction">
    <interactant intactId="EBI-6414583">
        <id>Q9AET8</id>
    </interactant>
    <interactant intactId="EBI-6414561">
        <id>Q939N5</id>
        <label>gspB</label>
    </interactant>
    <organismsDiffer>false</organismsDiffer>
    <experiments>4</experiments>
</comment>
<comment type="disruption phenotype">
    <text evidence="1 2">Loss of export of cell wall protein GspB, the protein accumulates intracellularly in protoplasts.</text>
</comment>
<comment type="similarity">
    <text evidence="3">Belongs to the accessory Sec system protein Asp2 family.</text>
</comment>
<sequence length="510" mass="59205">MKNKLKILQIGSIDWSKEVVIPDNMDWYYFFSLTLRLAIKKVMEMEKINHFSAIIVDDLDLIPDLFLIESRIIPYTIFYSKKQQAIQEPIAFFLKRYCAQQIDLSDRPNLLRKLSKALFRGQYGDKMTPLDMVVSPGFKGRICHNGYENLELEGNFGSDFRPIVSWKYNIVASKKNPVEIWLEYEKDLSCELRLRIYNIQEGSAADLVRESVFSETDMEETIVLDNDFTSFLGITLEARGFGTLKIGAFHQRLTRYQFGKFVLGGKILKDSHRQEINYFFYPGDFKPPLVVYFSGYRRAEGFEGFGMMRGLGCPFLLISDQRLDGGVFYLGSDELEEGIRRIIQEHMELLGFSERELILSGISMGTYGAAYYGADFSPRAIILCKPLANLGTIAQRGRLRLPEVFPMALDILHRHTGGKDRENVMELDNRYWKKFKKADFSRTIFGLAYMKEEDYDPTAYEDLVQYLYPTETQLMSNGLSGRHNDDSTMVINWFMNYHRIILEKEFGRKK</sequence>
<gene>
    <name type="primary">asp2</name>
</gene>
<protein>
    <recommendedName>
        <fullName>Accessory Sec system protein Asp2</fullName>
    </recommendedName>
    <alternativeName>
        <fullName>Accessory secretory protein Asp2</fullName>
    </alternativeName>
    <alternativeName>
        <fullName>Orf2</fullName>
    </alternativeName>
</protein>